<name>RL4_STRP4</name>
<keyword id="KW-0687">Ribonucleoprotein</keyword>
<keyword id="KW-0689">Ribosomal protein</keyword>
<keyword id="KW-0694">RNA-binding</keyword>
<keyword id="KW-0699">rRNA-binding</keyword>
<proteinExistence type="inferred from homology"/>
<gene>
    <name evidence="1" type="primary">rplD</name>
    <name type="ordered locus">SPG_0196</name>
</gene>
<organism>
    <name type="scientific">Streptococcus pneumoniae serotype 19F (strain G54)</name>
    <dbReference type="NCBI Taxonomy" id="512566"/>
    <lineage>
        <taxon>Bacteria</taxon>
        <taxon>Bacillati</taxon>
        <taxon>Bacillota</taxon>
        <taxon>Bacilli</taxon>
        <taxon>Lactobacillales</taxon>
        <taxon>Streptococcaceae</taxon>
        <taxon>Streptococcus</taxon>
    </lineage>
</organism>
<sequence>MANVTLFDQTGKEAGQVVLNDAVFGIEPNESVVFDVIISQRASLRQGTHAVKNRSAVSGGGRKPWRQKGTGRARQGSIRSPQWRGGGVVFGPTPRSYGYKLPQKVRRLALKSVYSEKVAENKFVAVDALSFTAPKTAEFAKVLAALSIDSKVLVILEEGNEFAALSARNLPNVKVATATTASVLDIANSDKLLVTQAAISKIEEVLA</sequence>
<protein>
    <recommendedName>
        <fullName evidence="1">Large ribosomal subunit protein uL4</fullName>
    </recommendedName>
    <alternativeName>
        <fullName evidence="3">50S ribosomal protein L4</fullName>
    </alternativeName>
</protein>
<comment type="function">
    <text evidence="1">One of the primary rRNA binding proteins, this protein initially binds near the 5'-end of the 23S rRNA. It is important during the early stages of 50S assembly. It makes multiple contacts with different domains of the 23S rRNA in the assembled 50S subunit and ribosome.</text>
</comment>
<comment type="function">
    <text evidence="1">Forms part of the polypeptide exit tunnel.</text>
</comment>
<comment type="subunit">
    <text evidence="1">Part of the 50S ribosomal subunit.</text>
</comment>
<comment type="similarity">
    <text evidence="1">Belongs to the universal ribosomal protein uL4 family.</text>
</comment>
<dbReference type="EMBL" id="CP001015">
    <property type="protein sequence ID" value="ACF55549.1"/>
    <property type="molecule type" value="Genomic_DNA"/>
</dbReference>
<dbReference type="SMR" id="B5E6F6"/>
<dbReference type="KEGG" id="spx:SPG_0196"/>
<dbReference type="HOGENOM" id="CLU_041575_5_2_9"/>
<dbReference type="GO" id="GO:1990904">
    <property type="term" value="C:ribonucleoprotein complex"/>
    <property type="evidence" value="ECO:0007669"/>
    <property type="project" value="UniProtKB-KW"/>
</dbReference>
<dbReference type="GO" id="GO:0005840">
    <property type="term" value="C:ribosome"/>
    <property type="evidence" value="ECO:0007669"/>
    <property type="project" value="UniProtKB-KW"/>
</dbReference>
<dbReference type="GO" id="GO:0019843">
    <property type="term" value="F:rRNA binding"/>
    <property type="evidence" value="ECO:0007669"/>
    <property type="project" value="UniProtKB-UniRule"/>
</dbReference>
<dbReference type="GO" id="GO:0003735">
    <property type="term" value="F:structural constituent of ribosome"/>
    <property type="evidence" value="ECO:0007669"/>
    <property type="project" value="InterPro"/>
</dbReference>
<dbReference type="GO" id="GO:0006412">
    <property type="term" value="P:translation"/>
    <property type="evidence" value="ECO:0007669"/>
    <property type="project" value="UniProtKB-UniRule"/>
</dbReference>
<dbReference type="FunFam" id="3.40.1370.10:FF:000003">
    <property type="entry name" value="50S ribosomal protein L4"/>
    <property type="match status" value="1"/>
</dbReference>
<dbReference type="Gene3D" id="3.40.1370.10">
    <property type="match status" value="1"/>
</dbReference>
<dbReference type="HAMAP" id="MF_01328_B">
    <property type="entry name" value="Ribosomal_uL4_B"/>
    <property type="match status" value="1"/>
</dbReference>
<dbReference type="InterPro" id="IPR002136">
    <property type="entry name" value="Ribosomal_uL4"/>
</dbReference>
<dbReference type="InterPro" id="IPR013005">
    <property type="entry name" value="Ribosomal_uL4-like"/>
</dbReference>
<dbReference type="InterPro" id="IPR023574">
    <property type="entry name" value="Ribosomal_uL4_dom_sf"/>
</dbReference>
<dbReference type="NCBIfam" id="TIGR03953">
    <property type="entry name" value="rplD_bact"/>
    <property type="match status" value="1"/>
</dbReference>
<dbReference type="PANTHER" id="PTHR10746">
    <property type="entry name" value="50S RIBOSOMAL PROTEIN L4"/>
    <property type="match status" value="1"/>
</dbReference>
<dbReference type="PANTHER" id="PTHR10746:SF6">
    <property type="entry name" value="LARGE RIBOSOMAL SUBUNIT PROTEIN UL4M"/>
    <property type="match status" value="1"/>
</dbReference>
<dbReference type="Pfam" id="PF00573">
    <property type="entry name" value="Ribosomal_L4"/>
    <property type="match status" value="1"/>
</dbReference>
<dbReference type="SUPFAM" id="SSF52166">
    <property type="entry name" value="Ribosomal protein L4"/>
    <property type="match status" value="1"/>
</dbReference>
<evidence type="ECO:0000255" key="1">
    <source>
        <dbReference type="HAMAP-Rule" id="MF_01328"/>
    </source>
</evidence>
<evidence type="ECO:0000256" key="2">
    <source>
        <dbReference type="SAM" id="MobiDB-lite"/>
    </source>
</evidence>
<evidence type="ECO:0000305" key="3"/>
<reference key="1">
    <citation type="journal article" date="2001" name="Microb. Drug Resist.">
        <title>Annotated draft genomic sequence from a Streptococcus pneumoniae type 19F clinical isolate.</title>
        <authorList>
            <person name="Dopazo J."/>
            <person name="Mendoza A."/>
            <person name="Herrero J."/>
            <person name="Caldara F."/>
            <person name="Humbert Y."/>
            <person name="Friedli L."/>
            <person name="Guerrier M."/>
            <person name="Grand-Schenk E."/>
            <person name="Gandin C."/>
            <person name="de Francesco M."/>
            <person name="Polissi A."/>
            <person name="Buell G."/>
            <person name="Feger G."/>
            <person name="Garcia E."/>
            <person name="Peitsch M."/>
            <person name="Garcia-Bustos J.F."/>
        </authorList>
    </citation>
    <scope>NUCLEOTIDE SEQUENCE [LARGE SCALE GENOMIC DNA]</scope>
    <source>
        <strain>G54</strain>
    </source>
</reference>
<reference key="2">
    <citation type="submission" date="2008-03" db="EMBL/GenBank/DDBJ databases">
        <title>Pneumococcal beta glucoside metabolism investigated by whole genome comparison.</title>
        <authorList>
            <person name="Mulas L."/>
            <person name="Trappetti C."/>
            <person name="Hakenbeck R."/>
            <person name="Iannelli F."/>
            <person name="Pozzi G."/>
            <person name="Davidsen T.M."/>
            <person name="Tettelin H."/>
            <person name="Oggioni M."/>
        </authorList>
    </citation>
    <scope>NUCLEOTIDE SEQUENCE [LARGE SCALE GENOMIC DNA]</scope>
    <source>
        <strain>G54</strain>
    </source>
</reference>
<accession>B5E6F6</accession>
<feature type="chain" id="PRO_1000142192" description="Large ribosomal subunit protein uL4">
    <location>
        <begin position="1"/>
        <end position="207"/>
    </location>
</feature>
<feature type="region of interest" description="Disordered" evidence="2">
    <location>
        <begin position="49"/>
        <end position="78"/>
    </location>
</feature>